<name>ATPB_STRPZ</name>
<gene>
    <name evidence="1" type="primary">atpD</name>
    <name type="ordered locus">Spy49_0588</name>
</gene>
<dbReference type="EC" id="7.1.2.2" evidence="1"/>
<dbReference type="EMBL" id="CP000829">
    <property type="protein sequence ID" value="ACI60913.1"/>
    <property type="molecule type" value="Genomic_DNA"/>
</dbReference>
<dbReference type="SMR" id="B5XKQ1"/>
<dbReference type="KEGG" id="soz:Spy49_0588"/>
<dbReference type="HOGENOM" id="CLU_022398_0_2_9"/>
<dbReference type="Proteomes" id="UP000001039">
    <property type="component" value="Chromosome"/>
</dbReference>
<dbReference type="GO" id="GO:0005886">
    <property type="term" value="C:plasma membrane"/>
    <property type="evidence" value="ECO:0007669"/>
    <property type="project" value="UniProtKB-SubCell"/>
</dbReference>
<dbReference type="GO" id="GO:0045259">
    <property type="term" value="C:proton-transporting ATP synthase complex"/>
    <property type="evidence" value="ECO:0007669"/>
    <property type="project" value="UniProtKB-KW"/>
</dbReference>
<dbReference type="GO" id="GO:0005524">
    <property type="term" value="F:ATP binding"/>
    <property type="evidence" value="ECO:0007669"/>
    <property type="project" value="UniProtKB-UniRule"/>
</dbReference>
<dbReference type="GO" id="GO:0016887">
    <property type="term" value="F:ATP hydrolysis activity"/>
    <property type="evidence" value="ECO:0007669"/>
    <property type="project" value="InterPro"/>
</dbReference>
<dbReference type="GO" id="GO:0046933">
    <property type="term" value="F:proton-transporting ATP synthase activity, rotational mechanism"/>
    <property type="evidence" value="ECO:0007669"/>
    <property type="project" value="UniProtKB-UniRule"/>
</dbReference>
<dbReference type="CDD" id="cd18110">
    <property type="entry name" value="ATP-synt_F1_beta_C"/>
    <property type="match status" value="1"/>
</dbReference>
<dbReference type="CDD" id="cd18115">
    <property type="entry name" value="ATP-synt_F1_beta_N"/>
    <property type="match status" value="1"/>
</dbReference>
<dbReference type="CDD" id="cd01133">
    <property type="entry name" value="F1-ATPase_beta_CD"/>
    <property type="match status" value="1"/>
</dbReference>
<dbReference type="FunFam" id="1.10.1140.10:FF:000001">
    <property type="entry name" value="ATP synthase subunit beta"/>
    <property type="match status" value="1"/>
</dbReference>
<dbReference type="FunFam" id="2.40.10.170:FF:000005">
    <property type="entry name" value="ATP synthase subunit beta"/>
    <property type="match status" value="1"/>
</dbReference>
<dbReference type="FunFam" id="3.40.50.300:FF:000004">
    <property type="entry name" value="ATP synthase subunit beta"/>
    <property type="match status" value="1"/>
</dbReference>
<dbReference type="Gene3D" id="2.40.10.170">
    <property type="match status" value="1"/>
</dbReference>
<dbReference type="Gene3D" id="1.10.1140.10">
    <property type="entry name" value="Bovine Mitochondrial F1-atpase, Atp Synthase Beta Chain, Chain D, domain 3"/>
    <property type="match status" value="1"/>
</dbReference>
<dbReference type="Gene3D" id="3.40.50.300">
    <property type="entry name" value="P-loop containing nucleotide triphosphate hydrolases"/>
    <property type="match status" value="1"/>
</dbReference>
<dbReference type="HAMAP" id="MF_01347">
    <property type="entry name" value="ATP_synth_beta_bact"/>
    <property type="match status" value="1"/>
</dbReference>
<dbReference type="InterPro" id="IPR003593">
    <property type="entry name" value="AAA+_ATPase"/>
</dbReference>
<dbReference type="InterPro" id="IPR055190">
    <property type="entry name" value="ATP-synt_VA_C"/>
</dbReference>
<dbReference type="InterPro" id="IPR005722">
    <property type="entry name" value="ATP_synth_F1_bsu"/>
</dbReference>
<dbReference type="InterPro" id="IPR020003">
    <property type="entry name" value="ATPase_a/bsu_AS"/>
</dbReference>
<dbReference type="InterPro" id="IPR050053">
    <property type="entry name" value="ATPase_alpha/beta_chains"/>
</dbReference>
<dbReference type="InterPro" id="IPR004100">
    <property type="entry name" value="ATPase_F1/V1/A1_a/bsu_N"/>
</dbReference>
<dbReference type="InterPro" id="IPR036121">
    <property type="entry name" value="ATPase_F1/V1/A1_a/bsu_N_sf"/>
</dbReference>
<dbReference type="InterPro" id="IPR000194">
    <property type="entry name" value="ATPase_F1/V1/A1_a/bsu_nucl-bd"/>
</dbReference>
<dbReference type="InterPro" id="IPR024034">
    <property type="entry name" value="ATPase_F1/V1_b/a_C"/>
</dbReference>
<dbReference type="InterPro" id="IPR027417">
    <property type="entry name" value="P-loop_NTPase"/>
</dbReference>
<dbReference type="NCBIfam" id="TIGR01039">
    <property type="entry name" value="atpD"/>
    <property type="match status" value="1"/>
</dbReference>
<dbReference type="PANTHER" id="PTHR15184">
    <property type="entry name" value="ATP SYNTHASE"/>
    <property type="match status" value="1"/>
</dbReference>
<dbReference type="PANTHER" id="PTHR15184:SF71">
    <property type="entry name" value="ATP SYNTHASE SUBUNIT BETA, MITOCHONDRIAL"/>
    <property type="match status" value="1"/>
</dbReference>
<dbReference type="Pfam" id="PF00006">
    <property type="entry name" value="ATP-synt_ab"/>
    <property type="match status" value="1"/>
</dbReference>
<dbReference type="Pfam" id="PF02874">
    <property type="entry name" value="ATP-synt_ab_N"/>
    <property type="match status" value="1"/>
</dbReference>
<dbReference type="Pfam" id="PF22919">
    <property type="entry name" value="ATP-synt_VA_C"/>
    <property type="match status" value="1"/>
</dbReference>
<dbReference type="SMART" id="SM00382">
    <property type="entry name" value="AAA"/>
    <property type="match status" value="1"/>
</dbReference>
<dbReference type="SUPFAM" id="SSF47917">
    <property type="entry name" value="C-terminal domain of alpha and beta subunits of F1 ATP synthase"/>
    <property type="match status" value="1"/>
</dbReference>
<dbReference type="SUPFAM" id="SSF50615">
    <property type="entry name" value="N-terminal domain of alpha and beta subunits of F1 ATP synthase"/>
    <property type="match status" value="1"/>
</dbReference>
<dbReference type="SUPFAM" id="SSF52540">
    <property type="entry name" value="P-loop containing nucleoside triphosphate hydrolases"/>
    <property type="match status" value="1"/>
</dbReference>
<dbReference type="PROSITE" id="PS00152">
    <property type="entry name" value="ATPASE_ALPHA_BETA"/>
    <property type="match status" value="1"/>
</dbReference>
<comment type="function">
    <text evidence="1">Produces ATP from ADP in the presence of a proton gradient across the membrane. The catalytic sites are hosted primarily by the beta subunits.</text>
</comment>
<comment type="catalytic activity">
    <reaction evidence="1">
        <text>ATP + H2O + 4 H(+)(in) = ADP + phosphate + 5 H(+)(out)</text>
        <dbReference type="Rhea" id="RHEA:57720"/>
        <dbReference type="ChEBI" id="CHEBI:15377"/>
        <dbReference type="ChEBI" id="CHEBI:15378"/>
        <dbReference type="ChEBI" id="CHEBI:30616"/>
        <dbReference type="ChEBI" id="CHEBI:43474"/>
        <dbReference type="ChEBI" id="CHEBI:456216"/>
        <dbReference type="EC" id="7.1.2.2"/>
    </reaction>
</comment>
<comment type="subunit">
    <text evidence="1">F-type ATPases have 2 components, CF(1) - the catalytic core - and CF(0) - the membrane proton channel. CF(1) has five subunits: alpha(3), beta(3), gamma(1), delta(1), epsilon(1). CF(0) has three main subunits: a(1), b(2) and c(9-12). The alpha and beta chains form an alternating ring which encloses part of the gamma chain. CF(1) is attached to CF(0) by a central stalk formed by the gamma and epsilon chains, while a peripheral stalk is formed by the delta and b chains.</text>
</comment>
<comment type="subcellular location">
    <subcellularLocation>
        <location evidence="1">Cell membrane</location>
        <topology evidence="1">Peripheral membrane protein</topology>
    </subcellularLocation>
</comment>
<comment type="similarity">
    <text evidence="1">Belongs to the ATPase alpha/beta chains family.</text>
</comment>
<evidence type="ECO:0000255" key="1">
    <source>
        <dbReference type="HAMAP-Rule" id="MF_01347"/>
    </source>
</evidence>
<keyword id="KW-0066">ATP synthesis</keyword>
<keyword id="KW-0067">ATP-binding</keyword>
<keyword id="KW-1003">Cell membrane</keyword>
<keyword id="KW-0139">CF(1)</keyword>
<keyword id="KW-0375">Hydrogen ion transport</keyword>
<keyword id="KW-0406">Ion transport</keyword>
<keyword id="KW-0472">Membrane</keyword>
<keyword id="KW-0547">Nucleotide-binding</keyword>
<keyword id="KW-1278">Translocase</keyword>
<keyword id="KW-0813">Transport</keyword>
<proteinExistence type="inferred from homology"/>
<feature type="chain" id="PRO_1000143555" description="ATP synthase subunit beta">
    <location>
        <begin position="1"/>
        <end position="468"/>
    </location>
</feature>
<feature type="binding site" evidence="1">
    <location>
        <begin position="155"/>
        <end position="162"/>
    </location>
    <ligand>
        <name>ATP</name>
        <dbReference type="ChEBI" id="CHEBI:30616"/>
    </ligand>
</feature>
<sequence length="468" mass="51107">MSSGKIAQVVGPVVDVMFASGDKLPEINNALIVYKDSDKKQKIVLEVALELGDGMVRTIAMESTDGLTRGLEVLDTGRAISVPVGKETLGRVFNVLGETIDLEEPFAEDVDRQPIHKKAPSFDELSTSSEILETGIKVIDLLAPYLKGGKVGLFGGAGVGKTVLIQELIHNIAQEHGGISVFTGVGERTREGNDLYWEMKESGVIEKTAMVFGQMNEPPGARMRVALTGLTIAEYFRDVESQDVLLFIDNIFRFTQAGSEVSALLGRMPSAVGYQPTLATEMGQLQERITSTQKGSVTSIQAIYVPADDYTDPAPATAFAHLDSTTNLERKLTQMGIYPAVDPLASSSRALSPEIVGEEHYAVATEVQRVLQRYRELQDIIAILGMDELSDEEKTLVGRARRIQFFLSQNFNVAEQFTGLPGSYVPVAETVRGFKEILEGKYDHLPEDAFRSVGPIEDVIKKAEKMGF</sequence>
<protein>
    <recommendedName>
        <fullName evidence="1">ATP synthase subunit beta</fullName>
        <ecNumber evidence="1">7.1.2.2</ecNumber>
    </recommendedName>
    <alternativeName>
        <fullName evidence="1">ATP synthase F1 sector subunit beta</fullName>
    </alternativeName>
    <alternativeName>
        <fullName evidence="1">F-ATPase subunit beta</fullName>
    </alternativeName>
</protein>
<reference key="1">
    <citation type="journal article" date="2008" name="J. Bacteriol.">
        <title>Genome sequence of a nephritogenic and highly transformable M49 strain of Streptococcus pyogenes.</title>
        <authorList>
            <person name="McShan W.M."/>
            <person name="Ferretti J.J."/>
            <person name="Karasawa T."/>
            <person name="Suvorov A.N."/>
            <person name="Lin S."/>
            <person name="Qin B."/>
            <person name="Jia H."/>
            <person name="Kenton S."/>
            <person name="Najar F."/>
            <person name="Wu H."/>
            <person name="Scott J."/>
            <person name="Roe B.A."/>
            <person name="Savic D.J."/>
        </authorList>
    </citation>
    <scope>NUCLEOTIDE SEQUENCE [LARGE SCALE GENOMIC DNA]</scope>
    <source>
        <strain>NZ131</strain>
    </source>
</reference>
<accession>B5XKQ1</accession>
<organism>
    <name type="scientific">Streptococcus pyogenes serotype M49 (strain NZ131)</name>
    <dbReference type="NCBI Taxonomy" id="471876"/>
    <lineage>
        <taxon>Bacteria</taxon>
        <taxon>Bacillati</taxon>
        <taxon>Bacillota</taxon>
        <taxon>Bacilli</taxon>
        <taxon>Lactobacillales</taxon>
        <taxon>Streptococcaceae</taxon>
        <taxon>Streptococcus</taxon>
    </lineage>
</organism>